<sequence length="152" mass="16661">MKLNELYNNIGAKKNKKRVARGIGSGKGKTAGRGVKGQKSRAGVAIKGFEGGQTPMIKRLPKRGFNCISSKKYNVINIYNIEAAIAEERLNANDVITKEKLIEIGLINKSNKKLVKLLSICSDDFNYPLSFKLDSYSSKAKEIVEKAGGKLL</sequence>
<organism>
    <name type="scientific">Rickettsia bellii (strain OSU 85-389)</name>
    <dbReference type="NCBI Taxonomy" id="391896"/>
    <lineage>
        <taxon>Bacteria</taxon>
        <taxon>Pseudomonadati</taxon>
        <taxon>Pseudomonadota</taxon>
        <taxon>Alphaproteobacteria</taxon>
        <taxon>Rickettsiales</taxon>
        <taxon>Rickettsiaceae</taxon>
        <taxon>Rickettsieae</taxon>
        <taxon>Rickettsia</taxon>
        <taxon>belli group</taxon>
    </lineage>
</organism>
<gene>
    <name evidence="1" type="primary">rplO</name>
    <name type="ordered locus">A1I_02130</name>
</gene>
<dbReference type="EMBL" id="CP000849">
    <property type="protein sequence ID" value="ABV78810.1"/>
    <property type="molecule type" value="Genomic_DNA"/>
</dbReference>
<dbReference type="RefSeq" id="WP_011477702.1">
    <property type="nucleotide sequence ID" value="NC_009883.1"/>
</dbReference>
<dbReference type="SMR" id="A8GVD3"/>
<dbReference type="KEGG" id="rbo:A1I_02130"/>
<dbReference type="HOGENOM" id="CLU_055188_4_0_5"/>
<dbReference type="GO" id="GO:0015934">
    <property type="term" value="C:large ribosomal subunit"/>
    <property type="evidence" value="ECO:0007669"/>
    <property type="project" value="InterPro"/>
</dbReference>
<dbReference type="GO" id="GO:0019843">
    <property type="term" value="F:rRNA binding"/>
    <property type="evidence" value="ECO:0007669"/>
    <property type="project" value="UniProtKB-UniRule"/>
</dbReference>
<dbReference type="GO" id="GO:0003735">
    <property type="term" value="F:structural constituent of ribosome"/>
    <property type="evidence" value="ECO:0007669"/>
    <property type="project" value="InterPro"/>
</dbReference>
<dbReference type="GO" id="GO:0006412">
    <property type="term" value="P:translation"/>
    <property type="evidence" value="ECO:0007669"/>
    <property type="project" value="UniProtKB-UniRule"/>
</dbReference>
<dbReference type="Gene3D" id="3.100.10.10">
    <property type="match status" value="1"/>
</dbReference>
<dbReference type="HAMAP" id="MF_01341">
    <property type="entry name" value="Ribosomal_uL15"/>
    <property type="match status" value="1"/>
</dbReference>
<dbReference type="InterPro" id="IPR030878">
    <property type="entry name" value="Ribosomal_uL15"/>
</dbReference>
<dbReference type="InterPro" id="IPR021131">
    <property type="entry name" value="Ribosomal_uL15/eL18"/>
</dbReference>
<dbReference type="InterPro" id="IPR036227">
    <property type="entry name" value="Ribosomal_uL15/eL18_sf"/>
</dbReference>
<dbReference type="InterPro" id="IPR005749">
    <property type="entry name" value="Ribosomal_uL15_bac-type"/>
</dbReference>
<dbReference type="NCBIfam" id="TIGR01071">
    <property type="entry name" value="rplO_bact"/>
    <property type="match status" value="1"/>
</dbReference>
<dbReference type="PANTHER" id="PTHR12934">
    <property type="entry name" value="50S RIBOSOMAL PROTEIN L15"/>
    <property type="match status" value="1"/>
</dbReference>
<dbReference type="PANTHER" id="PTHR12934:SF11">
    <property type="entry name" value="LARGE RIBOSOMAL SUBUNIT PROTEIN UL15M"/>
    <property type="match status" value="1"/>
</dbReference>
<dbReference type="Pfam" id="PF00828">
    <property type="entry name" value="Ribosomal_L27A"/>
    <property type="match status" value="1"/>
</dbReference>
<dbReference type="SUPFAM" id="SSF52080">
    <property type="entry name" value="Ribosomal proteins L15p and L18e"/>
    <property type="match status" value="1"/>
</dbReference>
<keyword id="KW-0687">Ribonucleoprotein</keyword>
<keyword id="KW-0689">Ribosomal protein</keyword>
<keyword id="KW-0694">RNA-binding</keyword>
<keyword id="KW-0699">rRNA-binding</keyword>
<proteinExistence type="inferred from homology"/>
<feature type="chain" id="PRO_1000054529" description="Large ribosomal subunit protein uL15">
    <location>
        <begin position="1"/>
        <end position="152"/>
    </location>
</feature>
<feature type="region of interest" description="Disordered" evidence="2">
    <location>
        <begin position="18"/>
        <end position="37"/>
    </location>
</feature>
<feature type="compositionally biased region" description="Gly residues" evidence="2">
    <location>
        <begin position="23"/>
        <end position="35"/>
    </location>
</feature>
<reference key="1">
    <citation type="submission" date="2007-09" db="EMBL/GenBank/DDBJ databases">
        <title>Complete genome sequencing of Rickettsia bellii.</title>
        <authorList>
            <person name="Madan A."/>
            <person name="Lee H."/>
            <person name="Madan A."/>
            <person name="Yoon J.-G."/>
            <person name="Ryu G.-Y."/>
            <person name="Dasch G."/>
            <person name="Ereemeva M."/>
        </authorList>
    </citation>
    <scope>NUCLEOTIDE SEQUENCE [LARGE SCALE GENOMIC DNA]</scope>
    <source>
        <strain>OSU 85-389</strain>
    </source>
</reference>
<evidence type="ECO:0000255" key="1">
    <source>
        <dbReference type="HAMAP-Rule" id="MF_01341"/>
    </source>
</evidence>
<evidence type="ECO:0000256" key="2">
    <source>
        <dbReference type="SAM" id="MobiDB-lite"/>
    </source>
</evidence>
<evidence type="ECO:0000305" key="3"/>
<accession>A8GVD3</accession>
<protein>
    <recommendedName>
        <fullName evidence="1">Large ribosomal subunit protein uL15</fullName>
    </recommendedName>
    <alternativeName>
        <fullName evidence="3">50S ribosomal protein L15</fullName>
    </alternativeName>
</protein>
<comment type="function">
    <text evidence="1">Binds to the 23S rRNA.</text>
</comment>
<comment type="subunit">
    <text evidence="1">Part of the 50S ribosomal subunit.</text>
</comment>
<comment type="similarity">
    <text evidence="1">Belongs to the universal ribosomal protein uL15 family.</text>
</comment>
<name>RL15_RICB8</name>